<evidence type="ECO:0000255" key="1">
    <source>
        <dbReference type="HAMAP-Rule" id="MF_00379"/>
    </source>
</evidence>
<name>MNME_BURO1</name>
<reference key="1">
    <citation type="submission" date="2006-05" db="EMBL/GenBank/DDBJ databases">
        <title>Complete sequence of chromosome 1 of Burkholderia cenocepacia AU 1054.</title>
        <authorList>
            <consortium name="US DOE Joint Genome Institute"/>
            <person name="Copeland A."/>
            <person name="Lucas S."/>
            <person name="Lapidus A."/>
            <person name="Barry K."/>
            <person name="Detter J.C."/>
            <person name="Glavina del Rio T."/>
            <person name="Hammon N."/>
            <person name="Israni S."/>
            <person name="Dalin E."/>
            <person name="Tice H."/>
            <person name="Pitluck S."/>
            <person name="Chain P."/>
            <person name="Malfatti S."/>
            <person name="Shin M."/>
            <person name="Vergez L."/>
            <person name="Schmutz J."/>
            <person name="Larimer F."/>
            <person name="Land M."/>
            <person name="Hauser L."/>
            <person name="Kyrpides N."/>
            <person name="Lykidis A."/>
            <person name="LiPuma J.J."/>
            <person name="Konstantinidis K."/>
            <person name="Tiedje J.M."/>
            <person name="Richardson P."/>
        </authorList>
    </citation>
    <scope>NUCLEOTIDE SEQUENCE [LARGE SCALE GENOMIC DNA]</scope>
    <source>
        <strain>AU 1054</strain>
    </source>
</reference>
<organism>
    <name type="scientific">Burkholderia orbicola (strain AU 1054)</name>
    <dbReference type="NCBI Taxonomy" id="331271"/>
    <lineage>
        <taxon>Bacteria</taxon>
        <taxon>Pseudomonadati</taxon>
        <taxon>Pseudomonadota</taxon>
        <taxon>Betaproteobacteria</taxon>
        <taxon>Burkholderiales</taxon>
        <taxon>Burkholderiaceae</taxon>
        <taxon>Burkholderia</taxon>
        <taxon>Burkholderia cepacia complex</taxon>
        <taxon>Burkholderia orbicola</taxon>
    </lineage>
</organism>
<accession>Q1BSF9</accession>
<comment type="function">
    <text evidence="1">Exhibits a very high intrinsic GTPase hydrolysis rate. Involved in the addition of a carboxymethylaminomethyl (cmnm) group at the wobble position (U34) of certain tRNAs, forming tRNA-cmnm(5)s(2)U34.</text>
</comment>
<comment type="cofactor">
    <cofactor evidence="1">
        <name>K(+)</name>
        <dbReference type="ChEBI" id="CHEBI:29103"/>
    </cofactor>
    <text evidence="1">Binds 1 potassium ion per subunit.</text>
</comment>
<comment type="subunit">
    <text evidence="1">Homodimer. Heterotetramer of two MnmE and two MnmG subunits.</text>
</comment>
<comment type="subcellular location">
    <subcellularLocation>
        <location evidence="1">Cytoplasm</location>
    </subcellularLocation>
</comment>
<comment type="similarity">
    <text evidence="1">Belongs to the TRAFAC class TrmE-Era-EngA-EngB-Septin-like GTPase superfamily. TrmE GTPase family.</text>
</comment>
<dbReference type="EC" id="3.6.-.-" evidence="1"/>
<dbReference type="EMBL" id="CP000378">
    <property type="protein sequence ID" value="ABF77446.1"/>
    <property type="molecule type" value="Genomic_DNA"/>
</dbReference>
<dbReference type="SMR" id="Q1BSF9"/>
<dbReference type="HOGENOM" id="CLU_019624_4_1_4"/>
<dbReference type="GO" id="GO:0005829">
    <property type="term" value="C:cytosol"/>
    <property type="evidence" value="ECO:0007669"/>
    <property type="project" value="TreeGrafter"/>
</dbReference>
<dbReference type="GO" id="GO:0005525">
    <property type="term" value="F:GTP binding"/>
    <property type="evidence" value="ECO:0007669"/>
    <property type="project" value="UniProtKB-UniRule"/>
</dbReference>
<dbReference type="GO" id="GO:0003924">
    <property type="term" value="F:GTPase activity"/>
    <property type="evidence" value="ECO:0007669"/>
    <property type="project" value="UniProtKB-UniRule"/>
</dbReference>
<dbReference type="GO" id="GO:0046872">
    <property type="term" value="F:metal ion binding"/>
    <property type="evidence" value="ECO:0007669"/>
    <property type="project" value="UniProtKB-KW"/>
</dbReference>
<dbReference type="GO" id="GO:0030488">
    <property type="term" value="P:tRNA methylation"/>
    <property type="evidence" value="ECO:0007669"/>
    <property type="project" value="TreeGrafter"/>
</dbReference>
<dbReference type="GO" id="GO:0002098">
    <property type="term" value="P:tRNA wobble uridine modification"/>
    <property type="evidence" value="ECO:0007669"/>
    <property type="project" value="TreeGrafter"/>
</dbReference>
<dbReference type="CDD" id="cd04164">
    <property type="entry name" value="trmE"/>
    <property type="match status" value="1"/>
</dbReference>
<dbReference type="CDD" id="cd14858">
    <property type="entry name" value="TrmE_N"/>
    <property type="match status" value="1"/>
</dbReference>
<dbReference type="Gene3D" id="3.40.50.300">
    <property type="entry name" value="P-loop containing nucleotide triphosphate hydrolases"/>
    <property type="match status" value="1"/>
</dbReference>
<dbReference type="Gene3D" id="3.30.1360.120">
    <property type="entry name" value="Probable tRNA modification gtpase trme, domain 1"/>
    <property type="match status" value="1"/>
</dbReference>
<dbReference type="Gene3D" id="1.20.120.430">
    <property type="entry name" value="tRNA modification GTPase MnmE domain 2"/>
    <property type="match status" value="1"/>
</dbReference>
<dbReference type="HAMAP" id="MF_00379">
    <property type="entry name" value="GTPase_MnmE"/>
    <property type="match status" value="1"/>
</dbReference>
<dbReference type="InterPro" id="IPR031168">
    <property type="entry name" value="G_TrmE"/>
</dbReference>
<dbReference type="InterPro" id="IPR006073">
    <property type="entry name" value="GTP-bd"/>
</dbReference>
<dbReference type="InterPro" id="IPR018948">
    <property type="entry name" value="GTP-bd_TrmE_N"/>
</dbReference>
<dbReference type="InterPro" id="IPR004520">
    <property type="entry name" value="GTPase_MnmE"/>
</dbReference>
<dbReference type="InterPro" id="IPR027368">
    <property type="entry name" value="MnmE_dom2"/>
</dbReference>
<dbReference type="InterPro" id="IPR025867">
    <property type="entry name" value="MnmE_helical"/>
</dbReference>
<dbReference type="InterPro" id="IPR027417">
    <property type="entry name" value="P-loop_NTPase"/>
</dbReference>
<dbReference type="InterPro" id="IPR005225">
    <property type="entry name" value="Small_GTP-bd"/>
</dbReference>
<dbReference type="InterPro" id="IPR027266">
    <property type="entry name" value="TrmE/GcvT_dom1"/>
</dbReference>
<dbReference type="NCBIfam" id="TIGR00450">
    <property type="entry name" value="mnmE_trmE_thdF"/>
    <property type="match status" value="1"/>
</dbReference>
<dbReference type="NCBIfam" id="NF003661">
    <property type="entry name" value="PRK05291.1-3"/>
    <property type="match status" value="1"/>
</dbReference>
<dbReference type="NCBIfam" id="TIGR00231">
    <property type="entry name" value="small_GTP"/>
    <property type="match status" value="1"/>
</dbReference>
<dbReference type="PANTHER" id="PTHR42714">
    <property type="entry name" value="TRNA MODIFICATION GTPASE GTPBP3"/>
    <property type="match status" value="1"/>
</dbReference>
<dbReference type="PANTHER" id="PTHR42714:SF2">
    <property type="entry name" value="TRNA MODIFICATION GTPASE GTPBP3, MITOCHONDRIAL"/>
    <property type="match status" value="1"/>
</dbReference>
<dbReference type="Pfam" id="PF01926">
    <property type="entry name" value="MMR_HSR1"/>
    <property type="match status" value="1"/>
</dbReference>
<dbReference type="Pfam" id="PF12631">
    <property type="entry name" value="MnmE_helical"/>
    <property type="match status" value="1"/>
</dbReference>
<dbReference type="Pfam" id="PF10396">
    <property type="entry name" value="TrmE_N"/>
    <property type="match status" value="1"/>
</dbReference>
<dbReference type="PRINTS" id="PR00326">
    <property type="entry name" value="GTP1OBG"/>
</dbReference>
<dbReference type="SUPFAM" id="SSF52540">
    <property type="entry name" value="P-loop containing nucleoside triphosphate hydrolases"/>
    <property type="match status" value="1"/>
</dbReference>
<dbReference type="SUPFAM" id="SSF116878">
    <property type="entry name" value="TrmE connector domain"/>
    <property type="match status" value="1"/>
</dbReference>
<dbReference type="PROSITE" id="PS51709">
    <property type="entry name" value="G_TRME"/>
    <property type="match status" value="1"/>
</dbReference>
<gene>
    <name evidence="1" type="primary">mnmE</name>
    <name evidence="1" type="synonym">trmE</name>
    <name type="ordered locus">Bcen_2547</name>
</gene>
<proteinExistence type="inferred from homology"/>
<sequence>MLATDSDPIVAIATAAGRGGIGVVRVSFGRGGEAAALPLIDALCGQKLAPRHASYVPFLDAHGAPLDRGIALYFPAPHSYTGEHVLELQGHGGPIVMQLLLQRCLDAGRGFGLRLAEPGEFTRRAFLNDKLDLAQAEAVADLIEASTEAAARSAGRSLDGAFSRQIHALVDDVITLRMLVEATLDFPEEEIDFLEAADARGKLAKIRAQLAHVLGDARQGALLREGLSVVLAGQPNVGKSSLLNALAGAELAIVTPIAGTTRDKVAQTIQVEGIPLHIIDTAGLRETEDEVERIGIARTWSEIERADVVLHLLDSRTGMTADDETIAARFPAGVPVVRVLNKTDLTGVPACVEHPAAEGDLTEVHLSAKRGDGIDMLRAELLRIAGWQAGAEGVYLARERHLIALRAAQEHLAQAANHAEQRAQSLDLFAEELRLAQEQLNAITGEFTSDDLLGVIFSRFCIGK</sequence>
<keyword id="KW-0963">Cytoplasm</keyword>
<keyword id="KW-0342">GTP-binding</keyword>
<keyword id="KW-0378">Hydrolase</keyword>
<keyword id="KW-0460">Magnesium</keyword>
<keyword id="KW-0479">Metal-binding</keyword>
<keyword id="KW-0547">Nucleotide-binding</keyword>
<keyword id="KW-0630">Potassium</keyword>
<keyword id="KW-0819">tRNA processing</keyword>
<feature type="chain" id="PRO_0000345737" description="tRNA modification GTPase MnmE">
    <location>
        <begin position="1"/>
        <end position="464"/>
    </location>
</feature>
<feature type="domain" description="TrmE-type G">
    <location>
        <begin position="226"/>
        <end position="386"/>
    </location>
</feature>
<feature type="binding site" evidence="1">
    <location>
        <position position="25"/>
    </location>
    <ligand>
        <name>(6S)-5-formyl-5,6,7,8-tetrahydrofolate</name>
        <dbReference type="ChEBI" id="CHEBI:57457"/>
    </ligand>
</feature>
<feature type="binding site" evidence="1">
    <location>
        <position position="87"/>
    </location>
    <ligand>
        <name>(6S)-5-formyl-5,6,7,8-tetrahydrofolate</name>
        <dbReference type="ChEBI" id="CHEBI:57457"/>
    </ligand>
</feature>
<feature type="binding site" evidence="1">
    <location>
        <position position="130"/>
    </location>
    <ligand>
        <name>(6S)-5-formyl-5,6,7,8-tetrahydrofolate</name>
        <dbReference type="ChEBI" id="CHEBI:57457"/>
    </ligand>
</feature>
<feature type="binding site" evidence="1">
    <location>
        <begin position="236"/>
        <end position="241"/>
    </location>
    <ligand>
        <name>GTP</name>
        <dbReference type="ChEBI" id="CHEBI:37565"/>
    </ligand>
</feature>
<feature type="binding site" evidence="1">
    <location>
        <position position="236"/>
    </location>
    <ligand>
        <name>K(+)</name>
        <dbReference type="ChEBI" id="CHEBI:29103"/>
    </ligand>
</feature>
<feature type="binding site" evidence="1">
    <location>
        <position position="240"/>
    </location>
    <ligand>
        <name>Mg(2+)</name>
        <dbReference type="ChEBI" id="CHEBI:18420"/>
    </ligand>
</feature>
<feature type="binding site" evidence="1">
    <location>
        <begin position="255"/>
        <end position="261"/>
    </location>
    <ligand>
        <name>GTP</name>
        <dbReference type="ChEBI" id="CHEBI:37565"/>
    </ligand>
</feature>
<feature type="binding site" evidence="1">
    <location>
        <position position="255"/>
    </location>
    <ligand>
        <name>K(+)</name>
        <dbReference type="ChEBI" id="CHEBI:29103"/>
    </ligand>
</feature>
<feature type="binding site" evidence="1">
    <location>
        <position position="257"/>
    </location>
    <ligand>
        <name>K(+)</name>
        <dbReference type="ChEBI" id="CHEBI:29103"/>
    </ligand>
</feature>
<feature type="binding site" evidence="1">
    <location>
        <position position="260"/>
    </location>
    <ligand>
        <name>K(+)</name>
        <dbReference type="ChEBI" id="CHEBI:29103"/>
    </ligand>
</feature>
<feature type="binding site" evidence="1">
    <location>
        <position position="261"/>
    </location>
    <ligand>
        <name>Mg(2+)</name>
        <dbReference type="ChEBI" id="CHEBI:18420"/>
    </ligand>
</feature>
<feature type="binding site" evidence="1">
    <location>
        <begin position="280"/>
        <end position="283"/>
    </location>
    <ligand>
        <name>GTP</name>
        <dbReference type="ChEBI" id="CHEBI:37565"/>
    </ligand>
</feature>
<feature type="binding site" evidence="1">
    <location>
        <position position="464"/>
    </location>
    <ligand>
        <name>(6S)-5-formyl-5,6,7,8-tetrahydrofolate</name>
        <dbReference type="ChEBI" id="CHEBI:57457"/>
    </ligand>
</feature>
<protein>
    <recommendedName>
        <fullName evidence="1">tRNA modification GTPase MnmE</fullName>
        <ecNumber evidence="1">3.6.-.-</ecNumber>
    </recommendedName>
</protein>